<comment type="function">
    <text evidence="3 10">Dioxygenase; part of the gene cluster that mediates the biosynthesis of strobilurin A, an antifungal polyketide that contains a key beta-methoxyacrylate toxophore that targets the complex III of the mitochondrial electron transport chain (PubMed:30258052). Strobilurin biosynthesis begins with construction of benzoyl CoA by step-wise elimination of ammonia from phenylalanine by the phenylalanine ammonia-lyase str11, oxygenation by str8 and retro-Claisen reaction to form benzoic acid, which is activated to its CoA thiolester benzoyl CoA by the dedicated CoA ligase str10 (PubMed:30258052). Benzoyl CoA forms the starter unit for the highly reducing polyketide synthase stpks1 that produces the polyketide prestrobilutin A (PubMed:30258052). The FAD-dependent oxygenase str9 then catalyzes the key oxidative rearrangement responsible for the creation of the beta-methoxyacrylate toxophore (PubMed:30258052). Str9 performs epoxidation of the 2,3 olefin of prestrobilutin A, followed by Meinwald rearrangement to furnish the aldehyde intermediate (Probable). Rapid enolization of the aldehyde intermediate would give the beta-methoxyacrylate skeleton and methylations catalyzed by str2 and str3 complete the synthesis and lead to the production of strobilurin A (Probable). The short-chain dehydrogenase stl2 and the dehydrogenase str4 play a role in the shunt pathway leading to the production of bolineol (PubMed:30258052). The cluster encodes no obvious halogenase gene that could be involved in production of strobilurin B, nor any obvious dimethylallyl-transferase that could be involved in the production of strobilurin G (Probable). It is possible that unknown proteins encoded in, or near, the cluster (such as str1 or stl1) may form new classes of halogenases or dimethylally-transferases, or that the responsible genes are located elsewhere on the genome (Probable). Similarly, proteins encoded by str5/str6 hydrolases appear to have no chemical role in the biosynthesis of strobilurin A (Probable). Finally, no obvious self-resistance gene is found within the cluster (Probable).</text>
</comment>
<comment type="cofactor">
    <cofactor evidence="1">
        <name>Fe(2+)</name>
        <dbReference type="ChEBI" id="CHEBI:29033"/>
    </cofactor>
    <text evidence="1">Binds 1 Fe(2+) ion per subunit.</text>
</comment>
<comment type="pathway">
    <text evidence="3">Mycotoxin biosynthesis.</text>
</comment>
<comment type="biotechnology">
    <text evidence="4 5 6 7 8">The structure of strobilurin A was used for the development of the major class of beta-methoxyacrylate agricultural fungicides since its beta-methoxyacrylate toxophore targets the Qo site of complex III of the mitochondrial electron transport chain and prevents adenosine triphosphate synthesis (PubMed:563391, PubMed:6271595). Compounds such as azoxystrobin (Syngenta) and Kresoxim methyl (BASF) are among the most widely used fungicides worldwide (PubMed:12146165, PubMed:29711574). This class of antifungals are used as effective treatments against a broad range of destructive fungal plant pathogens and make significant contributions to food security (PubMed:12146165, PubMed:29711574). The strobilurin fungicides are estimated to have been worth 3.4 billion dollars in 2015 and they make up 25% of the fungicide market and 6.7% of the total crop protection market (PubMed:30258052).</text>
</comment>
<comment type="similarity">
    <text evidence="9">Belongs to the gamma-BBH/TMLD family.</text>
</comment>
<name>STR8_STRTC</name>
<feature type="chain" id="PRO_0000449345" description="Dioxygenase str8" evidence="2">
    <location>
        <begin position="1"/>
        <end position="422"/>
    </location>
</feature>
<feature type="binding site" evidence="1">
    <location>
        <position position="73"/>
    </location>
    <ligand>
        <name>Zn(2+)</name>
        <dbReference type="ChEBI" id="CHEBI:29105"/>
    </ligand>
</feature>
<feature type="binding site" evidence="1">
    <location>
        <position position="75"/>
    </location>
    <ligand>
        <name>Zn(2+)</name>
        <dbReference type="ChEBI" id="CHEBI:29105"/>
    </ligand>
</feature>
<feature type="binding site" evidence="1">
    <location>
        <position position="78"/>
    </location>
    <ligand>
        <name>Zn(2+)</name>
        <dbReference type="ChEBI" id="CHEBI:29105"/>
    </ligand>
</feature>
<feature type="binding site" evidence="1">
    <location>
        <position position="119"/>
    </location>
    <ligand>
        <name>Zn(2+)</name>
        <dbReference type="ChEBI" id="CHEBI:29105"/>
    </ligand>
</feature>
<feature type="binding site" evidence="1">
    <location>
        <position position="243"/>
    </location>
    <ligand>
        <name>Fe cation</name>
        <dbReference type="ChEBI" id="CHEBI:24875"/>
        <note>catalytic</note>
    </ligand>
</feature>
<feature type="binding site" evidence="1">
    <location>
        <position position="245"/>
    </location>
    <ligand>
        <name>Fe cation</name>
        <dbReference type="ChEBI" id="CHEBI:24875"/>
        <note>catalytic</note>
    </ligand>
</feature>
<feature type="binding site" evidence="1">
    <location>
        <position position="382"/>
    </location>
    <ligand>
        <name>Fe cation</name>
        <dbReference type="ChEBI" id="CHEBI:24875"/>
        <note>catalytic</note>
    </ligand>
</feature>
<sequence length="422" mass="47791">MSRLLCPSSSTSVVRRARPTFVLGNLSIKQAQGTGASSALARRRRSTFAATADGLHVIPLEQKYPFPWLRDACRCPDCVHPSTRQKLFCTSDIPVDIQPATNGVEEVGEGVKIRWSNGHESLYDWDFLKEHSSSVSRSEANKDLPRVGWTRASIAKERDLYLEYEELKTKEGLRKAIDHTCRFGLLFIRNVPNVETSTASCSLRTLAHYFGDIRTTFYGELWDVKNVSNSRNIAYTNLGLGLHMDLLYFQHPPQFQFLHCLRNRVQGGSSIFSDALHAAETLRIQDAASYSVLTDVQVPFFYVNDGHHLYHTHPTIEVSASGDVNQINYSPPFQAPLLLDTPPAFFTALHQFSNLVNSDENTYEYTLEEGDAVLFDNRRVLHARRAFEEIPGQGVRVGEANRWLKGCYIEGDTMWDRGRMLR</sequence>
<evidence type="ECO:0000250" key="1">
    <source>
        <dbReference type="UniProtKB" id="O75936"/>
    </source>
</evidence>
<evidence type="ECO:0000255" key="2"/>
<evidence type="ECO:0000269" key="3">
    <source>
    </source>
</evidence>
<evidence type="ECO:0000269" key="4">
    <source>
    </source>
</evidence>
<evidence type="ECO:0000269" key="5">
    <source>
    </source>
</evidence>
<evidence type="ECO:0000303" key="6">
    <source>
    </source>
</evidence>
<evidence type="ECO:0000303" key="7">
    <source>
    </source>
</evidence>
<evidence type="ECO:0000303" key="8">
    <source>
    </source>
</evidence>
<evidence type="ECO:0000305" key="9"/>
<evidence type="ECO:0000305" key="10">
    <source>
    </source>
</evidence>
<keyword id="KW-0223">Dioxygenase</keyword>
<keyword id="KW-0408">Iron</keyword>
<keyword id="KW-0479">Metal-binding</keyword>
<keyword id="KW-0560">Oxidoreductase</keyword>
<keyword id="KW-0862">Zinc</keyword>
<reference key="1">
    <citation type="journal article" date="2018" name="Nat. Commun.">
        <title>Strobilurin biosynthesis in Basidiomycete fungi.</title>
        <authorList>
            <person name="Nofiani R."/>
            <person name="de Mattos-Shipley K."/>
            <person name="Lebe K.E."/>
            <person name="Han L.C."/>
            <person name="Iqbal Z."/>
            <person name="Bailey A.M."/>
            <person name="Willis C.L."/>
            <person name="Simpson T.J."/>
            <person name="Cox R.J."/>
        </authorList>
    </citation>
    <scope>NUCLEOTIDE SEQUENCE [GENOMIC DNA]</scope>
    <scope>FUNCTION</scope>
    <scope>BIOTECHNOLOGY</scope>
    <source>
        <strain>CBS 621.79</strain>
    </source>
</reference>
<reference key="2">
    <citation type="journal article" date="1977" name="J. Antibiot.">
        <title>The strobilurins--new antifungal antibiotics from the basidiomycete Strobilurus tenacellus.</title>
        <authorList>
            <person name="Anke T."/>
            <person name="Oberwinkler F."/>
            <person name="Steglich W."/>
            <person name="Schramm G."/>
        </authorList>
    </citation>
    <scope>BIOTECHNOLOGY</scope>
</reference>
<reference key="3">
    <citation type="journal article" date="1981" name="FEBS Lett.">
        <title>Oudemansin, strobilurin A, strobilurin B and myxothiazol: new inhibitors of the bc1 segment of the respiratory chain with an E-beta-methoxyacrylate system as common structural element.</title>
        <authorList>
            <person name="Becker W.F."/>
            <person name="von Jagow G."/>
            <person name="Anke T."/>
            <person name="Steglich W."/>
        </authorList>
    </citation>
    <scope>BIOTECHNOLOGY</scope>
</reference>
<reference key="4">
    <citation type="journal article" date="1999" name="Angew. Chem. Int. Ed.">
        <title>Strobilurins: evolution of a new class of active substances.</title>
        <authorList>
            <person name="Sauter H."/>
            <person name="Steglich W."/>
            <person name="Anke T."/>
        </authorList>
    </citation>
    <scope>REVIEW ON BIOTECHNOLOGY</scope>
</reference>
<reference key="5">
    <citation type="journal article" date="2002" name="Pest Manag. Sci.">
        <title>The strobilurin fungicides.</title>
        <authorList>
            <person name="Bartlett D.W."/>
            <person name="Clough J.M."/>
            <person name="Godwin J.R."/>
            <person name="Hall A.A."/>
            <person name="Hamer M."/>
            <person name="Parr-Dobrzanski B."/>
        </authorList>
    </citation>
    <scope>REVIEW ON BIOTECHNOLOGY</scope>
</reference>
<gene>
    <name evidence="8" type="primary">str8</name>
</gene>
<protein>
    <recommendedName>
        <fullName evidence="8">Dioxygenase str8</fullName>
        <ecNumber evidence="3">1.14.-.-</ecNumber>
    </recommendedName>
    <alternativeName>
        <fullName evidence="8">Strobilurin A biosynthesis cluster protein r8</fullName>
    </alternativeName>
</protein>
<dbReference type="EC" id="1.14.-.-" evidence="3"/>
<dbReference type="EMBL" id="KY070339">
    <property type="protein sequence ID" value="ATV82118.1"/>
    <property type="molecule type" value="Genomic_DNA"/>
</dbReference>
<dbReference type="SMR" id="A0A384XR80"/>
<dbReference type="GO" id="GO:0005739">
    <property type="term" value="C:mitochondrion"/>
    <property type="evidence" value="ECO:0007669"/>
    <property type="project" value="TreeGrafter"/>
</dbReference>
<dbReference type="GO" id="GO:0016706">
    <property type="term" value="F:2-oxoglutarate-dependent dioxygenase activity"/>
    <property type="evidence" value="ECO:0007669"/>
    <property type="project" value="UniProtKB-ARBA"/>
</dbReference>
<dbReference type="GO" id="GO:0046872">
    <property type="term" value="F:metal ion binding"/>
    <property type="evidence" value="ECO:0007669"/>
    <property type="project" value="UniProtKB-KW"/>
</dbReference>
<dbReference type="GO" id="GO:0045329">
    <property type="term" value="P:carnitine biosynthetic process"/>
    <property type="evidence" value="ECO:0007669"/>
    <property type="project" value="TreeGrafter"/>
</dbReference>
<dbReference type="CDD" id="cd00250">
    <property type="entry name" value="CAS_like"/>
    <property type="match status" value="1"/>
</dbReference>
<dbReference type="FunFam" id="3.30.2020.30:FF:000002">
    <property type="entry name" value="Putative gamma-butyrobetaine dioxygenase"/>
    <property type="match status" value="1"/>
</dbReference>
<dbReference type="Gene3D" id="3.30.2020.30">
    <property type="match status" value="1"/>
</dbReference>
<dbReference type="Gene3D" id="3.60.130.10">
    <property type="entry name" value="Clavaminate synthase-like"/>
    <property type="match status" value="1"/>
</dbReference>
<dbReference type="InterPro" id="IPR050411">
    <property type="entry name" value="AlphaKG_dependent_hydroxylases"/>
</dbReference>
<dbReference type="InterPro" id="IPR010376">
    <property type="entry name" value="GBBH-like_N"/>
</dbReference>
<dbReference type="InterPro" id="IPR038492">
    <property type="entry name" value="GBBH-like_N_sf"/>
</dbReference>
<dbReference type="InterPro" id="IPR042098">
    <property type="entry name" value="TauD-like_sf"/>
</dbReference>
<dbReference type="InterPro" id="IPR003819">
    <property type="entry name" value="TauD/TfdA-like"/>
</dbReference>
<dbReference type="PANTHER" id="PTHR10696">
    <property type="entry name" value="GAMMA-BUTYROBETAINE HYDROXYLASE-RELATED"/>
    <property type="match status" value="1"/>
</dbReference>
<dbReference type="PANTHER" id="PTHR10696:SF25">
    <property type="entry name" value="OXIDOREDUCTASE AIM17-RELATED"/>
    <property type="match status" value="1"/>
</dbReference>
<dbReference type="Pfam" id="PF06155">
    <property type="entry name" value="GBBH-like_N"/>
    <property type="match status" value="1"/>
</dbReference>
<dbReference type="Pfam" id="PF02668">
    <property type="entry name" value="TauD"/>
    <property type="match status" value="1"/>
</dbReference>
<dbReference type="SUPFAM" id="SSF51197">
    <property type="entry name" value="Clavaminate synthase-like"/>
    <property type="match status" value="1"/>
</dbReference>
<organism>
    <name type="scientific">Strobilurus tenacellus</name>
    <dbReference type="NCBI Taxonomy" id="41251"/>
    <lineage>
        <taxon>Eukaryota</taxon>
        <taxon>Fungi</taxon>
        <taxon>Dikarya</taxon>
        <taxon>Basidiomycota</taxon>
        <taxon>Agaricomycotina</taxon>
        <taxon>Agaricomycetes</taxon>
        <taxon>Agaricomycetidae</taxon>
        <taxon>Agaricales</taxon>
        <taxon>Marasmiineae</taxon>
        <taxon>Physalacriaceae</taxon>
        <taxon>Strobilurus</taxon>
    </lineage>
</organism>
<proteinExistence type="evidence at protein level"/>
<accession>A0A384XR80</accession>